<keyword id="KW-0240">DNA-directed RNA polymerase</keyword>
<keyword id="KW-0460">Magnesium</keyword>
<keyword id="KW-0479">Metal-binding</keyword>
<keyword id="KW-0548">Nucleotidyltransferase</keyword>
<keyword id="KW-0804">Transcription</keyword>
<keyword id="KW-0808">Transferase</keyword>
<keyword id="KW-0862">Zinc</keyword>
<comment type="function">
    <text evidence="1">DNA-dependent RNA polymerase catalyzes the transcription of DNA into RNA using the four ribonucleoside triphosphates as substrates.</text>
</comment>
<comment type="catalytic activity">
    <reaction evidence="1">
        <text>RNA(n) + a ribonucleoside 5'-triphosphate = RNA(n+1) + diphosphate</text>
        <dbReference type="Rhea" id="RHEA:21248"/>
        <dbReference type="Rhea" id="RHEA-COMP:14527"/>
        <dbReference type="Rhea" id="RHEA-COMP:17342"/>
        <dbReference type="ChEBI" id="CHEBI:33019"/>
        <dbReference type="ChEBI" id="CHEBI:61557"/>
        <dbReference type="ChEBI" id="CHEBI:140395"/>
        <dbReference type="EC" id="2.7.7.6"/>
    </reaction>
</comment>
<comment type="cofactor">
    <cofactor evidence="1">
        <name>Mg(2+)</name>
        <dbReference type="ChEBI" id="CHEBI:18420"/>
    </cofactor>
    <text evidence="1">Binds 1 Mg(2+) ion per subunit.</text>
</comment>
<comment type="cofactor">
    <cofactor evidence="1">
        <name>Zn(2+)</name>
        <dbReference type="ChEBI" id="CHEBI:29105"/>
    </cofactor>
    <text evidence="1">Binds 1 Zn(2+) ion per subunit.</text>
</comment>
<comment type="subunit">
    <text evidence="1">In cyanobacteria the RNAP catalytic core is composed of 2 alpha, 1 beta, 1 beta', 1 gamma and 1 omega subunit. When a sigma factor is associated with the core the holoenzyme is formed, which can initiate transcription.</text>
</comment>
<comment type="similarity">
    <text evidence="1">Belongs to the RNA polymerase beta' chain family. RpoC1 subfamily.</text>
</comment>
<dbReference type="EC" id="2.7.7.6" evidence="1"/>
<dbReference type="EMBL" id="CP000393">
    <property type="protein sequence ID" value="ABG52102.1"/>
    <property type="molecule type" value="Genomic_DNA"/>
</dbReference>
<dbReference type="RefSeq" id="WP_011612460.1">
    <property type="nucleotide sequence ID" value="NC_008312.1"/>
</dbReference>
<dbReference type="SMR" id="Q110H2"/>
<dbReference type="STRING" id="203124.Tery_2938"/>
<dbReference type="KEGG" id="ter:Tery_2938"/>
<dbReference type="eggNOG" id="COG0086">
    <property type="taxonomic scope" value="Bacteria"/>
</dbReference>
<dbReference type="HOGENOM" id="CLU_030022_2_0_3"/>
<dbReference type="OrthoDB" id="9815296at2"/>
<dbReference type="GO" id="GO:0000428">
    <property type="term" value="C:DNA-directed RNA polymerase complex"/>
    <property type="evidence" value="ECO:0007669"/>
    <property type="project" value="UniProtKB-KW"/>
</dbReference>
<dbReference type="GO" id="GO:0003677">
    <property type="term" value="F:DNA binding"/>
    <property type="evidence" value="ECO:0007669"/>
    <property type="project" value="UniProtKB-UniRule"/>
</dbReference>
<dbReference type="GO" id="GO:0003899">
    <property type="term" value="F:DNA-directed RNA polymerase activity"/>
    <property type="evidence" value="ECO:0007669"/>
    <property type="project" value="UniProtKB-UniRule"/>
</dbReference>
<dbReference type="GO" id="GO:0000287">
    <property type="term" value="F:magnesium ion binding"/>
    <property type="evidence" value="ECO:0007669"/>
    <property type="project" value="UniProtKB-UniRule"/>
</dbReference>
<dbReference type="GO" id="GO:0008270">
    <property type="term" value="F:zinc ion binding"/>
    <property type="evidence" value="ECO:0007669"/>
    <property type="project" value="UniProtKB-UniRule"/>
</dbReference>
<dbReference type="GO" id="GO:0006351">
    <property type="term" value="P:DNA-templated transcription"/>
    <property type="evidence" value="ECO:0007669"/>
    <property type="project" value="UniProtKB-UniRule"/>
</dbReference>
<dbReference type="Gene3D" id="1.10.40.90">
    <property type="match status" value="1"/>
</dbReference>
<dbReference type="Gene3D" id="2.40.40.20">
    <property type="match status" value="1"/>
</dbReference>
<dbReference type="Gene3D" id="4.10.860.120">
    <property type="entry name" value="RNA polymerase II, clamp domain"/>
    <property type="match status" value="1"/>
</dbReference>
<dbReference type="Gene3D" id="1.10.274.100">
    <property type="entry name" value="RNA polymerase Rpb1, domain 3"/>
    <property type="match status" value="1"/>
</dbReference>
<dbReference type="HAMAP" id="MF_01323">
    <property type="entry name" value="RNApol_bact_RpoC1"/>
    <property type="match status" value="1"/>
</dbReference>
<dbReference type="InterPro" id="IPR012755">
    <property type="entry name" value="DNA-dir_RpoC1_gamma"/>
</dbReference>
<dbReference type="InterPro" id="IPR045867">
    <property type="entry name" value="DNA-dir_RpoC_beta_prime"/>
</dbReference>
<dbReference type="InterPro" id="IPR000722">
    <property type="entry name" value="RNA_pol_asu"/>
</dbReference>
<dbReference type="InterPro" id="IPR006592">
    <property type="entry name" value="RNA_pol_N"/>
</dbReference>
<dbReference type="InterPro" id="IPR007080">
    <property type="entry name" value="RNA_pol_Rpb1_1"/>
</dbReference>
<dbReference type="InterPro" id="IPR007066">
    <property type="entry name" value="RNA_pol_Rpb1_3"/>
</dbReference>
<dbReference type="InterPro" id="IPR042102">
    <property type="entry name" value="RNA_pol_Rpb1_3_sf"/>
</dbReference>
<dbReference type="InterPro" id="IPR044893">
    <property type="entry name" value="RNA_pol_Rpb1_clamp_domain"/>
</dbReference>
<dbReference type="InterPro" id="IPR034678">
    <property type="entry name" value="RNApol_RpoC1"/>
</dbReference>
<dbReference type="NCBIfam" id="NF002729">
    <property type="entry name" value="PRK02625.1"/>
    <property type="match status" value="1"/>
</dbReference>
<dbReference type="NCBIfam" id="TIGR02387">
    <property type="entry name" value="rpoC1_cyan"/>
    <property type="match status" value="1"/>
</dbReference>
<dbReference type="PANTHER" id="PTHR19376">
    <property type="entry name" value="DNA-DIRECTED RNA POLYMERASE"/>
    <property type="match status" value="1"/>
</dbReference>
<dbReference type="PANTHER" id="PTHR19376:SF54">
    <property type="entry name" value="DNA-DIRECTED RNA POLYMERASE SUBUNIT BETA"/>
    <property type="match status" value="1"/>
</dbReference>
<dbReference type="Pfam" id="PF04997">
    <property type="entry name" value="RNA_pol_Rpb1_1"/>
    <property type="match status" value="1"/>
</dbReference>
<dbReference type="Pfam" id="PF00623">
    <property type="entry name" value="RNA_pol_Rpb1_2"/>
    <property type="match status" value="2"/>
</dbReference>
<dbReference type="Pfam" id="PF04983">
    <property type="entry name" value="RNA_pol_Rpb1_3"/>
    <property type="match status" value="1"/>
</dbReference>
<dbReference type="SMART" id="SM00663">
    <property type="entry name" value="RPOLA_N"/>
    <property type="match status" value="1"/>
</dbReference>
<dbReference type="SUPFAM" id="SSF64484">
    <property type="entry name" value="beta and beta-prime subunits of DNA dependent RNA-polymerase"/>
    <property type="match status" value="1"/>
</dbReference>
<sequence>MPKLEQRFDYVKIGLASPDRIRGWGERTLPNGTVVGEVTKPETINYRTLKPEMDGLFCERIFGPAKDWECHCGKYKRVRHRGIVCERCGVEVTESRVRRHRMGHIKLAAPVTHVWYLKGIPSYMAILLDMPLRDVEQIVYFNAYVVLEPGNHESLSYKQLLSEDVWLEIEDQIYSEDSEIVGVDVGIGAEALQVLLANLDLEVEAEKLREEIANSKGQKRAKLIKRLRVIDNFIATGSRPEWMVLDAIPVIPPDLRPMVQLDGGRFATSDLNDLYRRVINRNNRLARLQEILAPEIIIRNEKRMLQEAVDALIDNGRRGRTVVGANNRPLKSLSDIIEGKQGRFRQNLLGKRVDYSGRSVIVVGPKLAINQCGLPREMAIELFQPFVIHRLIRQGLVNNIKAAKKLIQKGDPNVWDVLEEVIDGHPVMLNRAPTLHRLGIQAFEPILVEGRAIQLHPLVCPAFNADFDGDQMAVHVPLSLESQAEARLLMLASNNVLSPATGRPIITPSQDMVLGCYYLTAENHKLQGSKALYFANPDDVILAYQQDKIDLHTYVYLRLAPDVEIETDKPEEIPPDIQQISDELVVHTYWMPLDSKVLPNTLGELKSEQKCENGDLVKAYNLYRIHYSQEGEIKKVYIKSRQVRQSNGLVTTQFVVTTPGRIIINQTIQSVL</sequence>
<feature type="chain" id="PRO_1000073245" description="DNA-directed RNA polymerase subunit gamma">
    <location>
        <begin position="1"/>
        <end position="672"/>
    </location>
</feature>
<feature type="binding site" evidence="1">
    <location>
        <position position="70"/>
    </location>
    <ligand>
        <name>Zn(2+)</name>
        <dbReference type="ChEBI" id="CHEBI:29105"/>
    </ligand>
</feature>
<feature type="binding site" evidence="1">
    <location>
        <position position="72"/>
    </location>
    <ligand>
        <name>Zn(2+)</name>
        <dbReference type="ChEBI" id="CHEBI:29105"/>
    </ligand>
</feature>
<feature type="binding site" evidence="1">
    <location>
        <position position="85"/>
    </location>
    <ligand>
        <name>Zn(2+)</name>
        <dbReference type="ChEBI" id="CHEBI:29105"/>
    </ligand>
</feature>
<feature type="binding site" evidence="1">
    <location>
        <position position="88"/>
    </location>
    <ligand>
        <name>Zn(2+)</name>
        <dbReference type="ChEBI" id="CHEBI:29105"/>
    </ligand>
</feature>
<feature type="binding site" evidence="1">
    <location>
        <position position="466"/>
    </location>
    <ligand>
        <name>Mg(2+)</name>
        <dbReference type="ChEBI" id="CHEBI:18420"/>
    </ligand>
</feature>
<feature type="binding site" evidence="1">
    <location>
        <position position="468"/>
    </location>
    <ligand>
        <name>Mg(2+)</name>
        <dbReference type="ChEBI" id="CHEBI:18420"/>
    </ligand>
</feature>
<feature type="binding site" evidence="1">
    <location>
        <position position="470"/>
    </location>
    <ligand>
        <name>Mg(2+)</name>
        <dbReference type="ChEBI" id="CHEBI:18420"/>
    </ligand>
</feature>
<name>RPOC1_TRIEI</name>
<accession>Q110H2</accession>
<proteinExistence type="inferred from homology"/>
<evidence type="ECO:0000255" key="1">
    <source>
        <dbReference type="HAMAP-Rule" id="MF_01323"/>
    </source>
</evidence>
<protein>
    <recommendedName>
        <fullName evidence="1">DNA-directed RNA polymerase subunit gamma</fullName>
        <shortName evidence="1">RNAP subunit gamma</shortName>
        <ecNumber evidence="1">2.7.7.6</ecNumber>
    </recommendedName>
    <alternativeName>
        <fullName evidence="1">RNA polymerase subunit gamma</fullName>
    </alternativeName>
    <alternativeName>
        <fullName evidence="1">Transcriptase subunit gamma</fullName>
    </alternativeName>
</protein>
<reference key="1">
    <citation type="journal article" date="2015" name="Proc. Natl. Acad. Sci. U.S.A.">
        <title>Trichodesmium genome maintains abundant, widespread noncoding DNA in situ, despite oligotrophic lifestyle.</title>
        <authorList>
            <person name="Walworth N."/>
            <person name="Pfreundt U."/>
            <person name="Nelson W.C."/>
            <person name="Mincer T."/>
            <person name="Heidelberg J.F."/>
            <person name="Fu F."/>
            <person name="Waterbury J.B."/>
            <person name="Glavina del Rio T."/>
            <person name="Goodwin L."/>
            <person name="Kyrpides N.C."/>
            <person name="Land M.L."/>
            <person name="Woyke T."/>
            <person name="Hutchins D.A."/>
            <person name="Hess W.R."/>
            <person name="Webb E.A."/>
        </authorList>
    </citation>
    <scope>NUCLEOTIDE SEQUENCE [LARGE SCALE GENOMIC DNA]</scope>
    <source>
        <strain>IMS101</strain>
    </source>
</reference>
<gene>
    <name evidence="1" type="primary">rpoC1</name>
    <name type="ordered locus">Tery_2938</name>
</gene>
<organism>
    <name type="scientific">Trichodesmium erythraeum (strain IMS101)</name>
    <dbReference type="NCBI Taxonomy" id="203124"/>
    <lineage>
        <taxon>Bacteria</taxon>
        <taxon>Bacillati</taxon>
        <taxon>Cyanobacteriota</taxon>
        <taxon>Cyanophyceae</taxon>
        <taxon>Oscillatoriophycideae</taxon>
        <taxon>Oscillatoriales</taxon>
        <taxon>Microcoleaceae</taxon>
        <taxon>Trichodesmium</taxon>
    </lineage>
</organism>